<sequence length="55" mass="6618">MAKKGARVQVTLEHKCEQGVYRYHTTKNRRNTTDRLELKKYSPVTKQHEIFKEIK</sequence>
<keyword id="KW-0150">Chloroplast</keyword>
<keyword id="KW-0934">Plastid</keyword>
<keyword id="KW-0687">Ribonucleoprotein</keyword>
<keyword id="KW-0689">Ribosomal protein</keyword>
<reference key="1">
    <citation type="journal article" date="2005" name="DNA Res.">
        <title>The complete plastid genome sequence of the haptophyte Emiliania huxleyi: a comparison to other plastid genomes.</title>
        <authorList>
            <person name="Sanchez-Puerta M.V."/>
            <person name="Bachvaroff T.R."/>
            <person name="Delwiche C.F."/>
        </authorList>
    </citation>
    <scope>NUCLEOTIDE SEQUENCE [LARGE SCALE GENOMIC DNA]</scope>
    <source>
        <strain>CCMP373 / CSIRO-CS-57 / BT6</strain>
    </source>
</reference>
<name>RK33_EMIHU</name>
<protein>
    <recommendedName>
        <fullName evidence="1">Large ribosomal subunit protein bL33c</fullName>
    </recommendedName>
    <alternativeName>
        <fullName evidence="2">50S ribosomal protein L33, chloroplastic</fullName>
    </alternativeName>
</protein>
<geneLocation type="chloroplast"/>
<feature type="chain" id="PRO_0000276523" description="Large ribosomal subunit protein bL33c">
    <location>
        <begin position="1"/>
        <end position="55"/>
    </location>
</feature>
<comment type="subcellular location">
    <subcellularLocation>
        <location>Plastid</location>
        <location>Chloroplast</location>
    </subcellularLocation>
</comment>
<comment type="similarity">
    <text evidence="1">Belongs to the bacterial ribosomal protein bL33 family.</text>
</comment>
<proteinExistence type="inferred from homology"/>
<gene>
    <name evidence="1" type="primary">rpl33</name>
</gene>
<dbReference type="EMBL" id="AY741371">
    <property type="protein sequence ID" value="AAX13826.1"/>
    <property type="molecule type" value="Genomic_DNA"/>
</dbReference>
<dbReference type="RefSeq" id="YP_277327.1">
    <property type="nucleotide sequence ID" value="NC_007288.1"/>
</dbReference>
<dbReference type="SMR" id="Q4G3E0"/>
<dbReference type="GeneID" id="3562558"/>
<dbReference type="GO" id="GO:0009507">
    <property type="term" value="C:chloroplast"/>
    <property type="evidence" value="ECO:0007669"/>
    <property type="project" value="UniProtKB-SubCell"/>
</dbReference>
<dbReference type="GO" id="GO:1990904">
    <property type="term" value="C:ribonucleoprotein complex"/>
    <property type="evidence" value="ECO:0007669"/>
    <property type="project" value="UniProtKB-KW"/>
</dbReference>
<dbReference type="GO" id="GO:0005840">
    <property type="term" value="C:ribosome"/>
    <property type="evidence" value="ECO:0007669"/>
    <property type="project" value="UniProtKB-KW"/>
</dbReference>
<dbReference type="GO" id="GO:0003735">
    <property type="term" value="F:structural constituent of ribosome"/>
    <property type="evidence" value="ECO:0007669"/>
    <property type="project" value="InterPro"/>
</dbReference>
<dbReference type="GO" id="GO:0006412">
    <property type="term" value="P:translation"/>
    <property type="evidence" value="ECO:0007669"/>
    <property type="project" value="UniProtKB-UniRule"/>
</dbReference>
<dbReference type="Gene3D" id="2.20.28.120">
    <property type="entry name" value="Ribosomal protein L33"/>
    <property type="match status" value="1"/>
</dbReference>
<dbReference type="HAMAP" id="MF_00294">
    <property type="entry name" value="Ribosomal_bL33"/>
    <property type="match status" value="1"/>
</dbReference>
<dbReference type="InterPro" id="IPR001705">
    <property type="entry name" value="Ribosomal_bL33"/>
</dbReference>
<dbReference type="InterPro" id="IPR018264">
    <property type="entry name" value="Ribosomal_bL33_CS"/>
</dbReference>
<dbReference type="InterPro" id="IPR038584">
    <property type="entry name" value="Ribosomal_bL33_sf"/>
</dbReference>
<dbReference type="InterPro" id="IPR011332">
    <property type="entry name" value="Ribosomal_zn-bd"/>
</dbReference>
<dbReference type="NCBIfam" id="NF001764">
    <property type="entry name" value="PRK00504.1"/>
    <property type="match status" value="1"/>
</dbReference>
<dbReference type="NCBIfam" id="NF001860">
    <property type="entry name" value="PRK00595.1"/>
    <property type="match status" value="1"/>
</dbReference>
<dbReference type="NCBIfam" id="TIGR01023">
    <property type="entry name" value="rpmG_bact"/>
    <property type="match status" value="1"/>
</dbReference>
<dbReference type="PANTHER" id="PTHR43168">
    <property type="entry name" value="50S RIBOSOMAL PROTEIN L33, CHLOROPLASTIC"/>
    <property type="match status" value="1"/>
</dbReference>
<dbReference type="PANTHER" id="PTHR43168:SF2">
    <property type="entry name" value="LARGE RIBOSOMAL SUBUNIT PROTEIN BL33C"/>
    <property type="match status" value="1"/>
</dbReference>
<dbReference type="Pfam" id="PF00471">
    <property type="entry name" value="Ribosomal_L33"/>
    <property type="match status" value="1"/>
</dbReference>
<dbReference type="SUPFAM" id="SSF57829">
    <property type="entry name" value="Zn-binding ribosomal proteins"/>
    <property type="match status" value="1"/>
</dbReference>
<dbReference type="PROSITE" id="PS00582">
    <property type="entry name" value="RIBOSOMAL_L33"/>
    <property type="match status" value="1"/>
</dbReference>
<evidence type="ECO:0000255" key="1">
    <source>
        <dbReference type="HAMAP-Rule" id="MF_00294"/>
    </source>
</evidence>
<evidence type="ECO:0000305" key="2"/>
<accession>Q4G3E0</accession>
<organism>
    <name type="scientific">Emiliania huxleyi</name>
    <name type="common">Coccolithophore</name>
    <name type="synonym">Pontosphaera huxleyi</name>
    <dbReference type="NCBI Taxonomy" id="2903"/>
    <lineage>
        <taxon>Eukaryota</taxon>
        <taxon>Haptista</taxon>
        <taxon>Haptophyta</taxon>
        <taxon>Prymnesiophyceae</taxon>
        <taxon>Isochrysidales</taxon>
        <taxon>Noelaerhabdaceae</taxon>
        <taxon>Emiliania</taxon>
    </lineage>
</organism>